<proteinExistence type="inferred from homology"/>
<evidence type="ECO:0000255" key="1">
    <source>
        <dbReference type="HAMAP-Rule" id="MF_01400"/>
    </source>
</evidence>
<evidence type="ECO:0000255" key="2">
    <source>
        <dbReference type="PROSITE-ProRule" id="PRU01126"/>
    </source>
</evidence>
<reference key="1">
    <citation type="journal article" date="2004" name="Proc. Natl. Acad. Sci. U.S.A.">
        <title>Genomic plasticity of the causative agent of melioidosis, Burkholderia pseudomallei.</title>
        <authorList>
            <person name="Holden M.T.G."/>
            <person name="Titball R.W."/>
            <person name="Peacock S.J."/>
            <person name="Cerdeno-Tarraga A.-M."/>
            <person name="Atkins T."/>
            <person name="Crossman L.C."/>
            <person name="Pitt T."/>
            <person name="Churcher C."/>
            <person name="Mungall K.L."/>
            <person name="Bentley S.D."/>
            <person name="Sebaihia M."/>
            <person name="Thomson N.R."/>
            <person name="Bason N."/>
            <person name="Beacham I.R."/>
            <person name="Brooks K."/>
            <person name="Brown K.A."/>
            <person name="Brown N.F."/>
            <person name="Challis G.L."/>
            <person name="Cherevach I."/>
            <person name="Chillingworth T."/>
            <person name="Cronin A."/>
            <person name="Crossett B."/>
            <person name="Davis P."/>
            <person name="DeShazer D."/>
            <person name="Feltwell T."/>
            <person name="Fraser A."/>
            <person name="Hance Z."/>
            <person name="Hauser H."/>
            <person name="Holroyd S."/>
            <person name="Jagels K."/>
            <person name="Keith K.E."/>
            <person name="Maddison M."/>
            <person name="Moule S."/>
            <person name="Price C."/>
            <person name="Quail M.A."/>
            <person name="Rabbinowitsch E."/>
            <person name="Rutherford K."/>
            <person name="Sanders M."/>
            <person name="Simmonds M."/>
            <person name="Songsivilai S."/>
            <person name="Stevens K."/>
            <person name="Tumapa S."/>
            <person name="Vesaratchavest M."/>
            <person name="Whitehead S."/>
            <person name="Yeats C."/>
            <person name="Barrell B.G."/>
            <person name="Oyston P.C.F."/>
            <person name="Parkhill J."/>
        </authorList>
    </citation>
    <scope>NUCLEOTIDE SEQUENCE [LARGE SCALE GENOMIC DNA]</scope>
    <source>
        <strain>K96243</strain>
    </source>
</reference>
<organism>
    <name type="scientific">Burkholderia pseudomallei (strain K96243)</name>
    <dbReference type="NCBI Taxonomy" id="272560"/>
    <lineage>
        <taxon>Bacteria</taxon>
        <taxon>Pseudomonadati</taxon>
        <taxon>Pseudomonadota</taxon>
        <taxon>Betaproteobacteria</taxon>
        <taxon>Burkholderiales</taxon>
        <taxon>Burkholderiaceae</taxon>
        <taxon>Burkholderia</taxon>
        <taxon>pseudomallei group</taxon>
    </lineage>
</organism>
<gene>
    <name evidence="1" type="primary">msrB</name>
    <name type="ordered locus">BPSL1421</name>
</gene>
<sequence>MSGDRDDPRYPYPKDDAELRRRLTPMQYEVTQHAATEPPFTGEYTDTEDAGIYHCVVCGTALFESGAKFHSGCGWPSYFKPIDGEVIDEKMDYTHGMTRVEVRCNQCGAHLGHVFEDGPRDKTGLRYCINSAALNFEAKPERK</sequence>
<name>MSRB_BURPS</name>
<dbReference type="EC" id="1.8.4.12" evidence="1"/>
<dbReference type="EMBL" id="BX571965">
    <property type="protein sequence ID" value="CAH35423.1"/>
    <property type="molecule type" value="Genomic_DNA"/>
</dbReference>
<dbReference type="RefSeq" id="WP_004193880.1">
    <property type="nucleotide sequence ID" value="NZ_CP009538.1"/>
</dbReference>
<dbReference type="RefSeq" id="YP_108043.1">
    <property type="nucleotide sequence ID" value="NC_006350.1"/>
</dbReference>
<dbReference type="SMR" id="Q63V23"/>
<dbReference type="STRING" id="272560.BPSL1421"/>
<dbReference type="GeneID" id="92979175"/>
<dbReference type="KEGG" id="bps:BPSL1421"/>
<dbReference type="PATRIC" id="fig|272560.51.peg.3440"/>
<dbReference type="eggNOG" id="COG0229">
    <property type="taxonomic scope" value="Bacteria"/>
</dbReference>
<dbReference type="Proteomes" id="UP000000605">
    <property type="component" value="Chromosome 1"/>
</dbReference>
<dbReference type="GO" id="GO:0005737">
    <property type="term" value="C:cytoplasm"/>
    <property type="evidence" value="ECO:0007669"/>
    <property type="project" value="TreeGrafter"/>
</dbReference>
<dbReference type="GO" id="GO:0033743">
    <property type="term" value="F:peptide-methionine (R)-S-oxide reductase activity"/>
    <property type="evidence" value="ECO:0007669"/>
    <property type="project" value="UniProtKB-UniRule"/>
</dbReference>
<dbReference type="GO" id="GO:0008270">
    <property type="term" value="F:zinc ion binding"/>
    <property type="evidence" value="ECO:0007669"/>
    <property type="project" value="UniProtKB-UniRule"/>
</dbReference>
<dbReference type="GO" id="GO:0030091">
    <property type="term" value="P:protein repair"/>
    <property type="evidence" value="ECO:0007669"/>
    <property type="project" value="InterPro"/>
</dbReference>
<dbReference type="GO" id="GO:0006979">
    <property type="term" value="P:response to oxidative stress"/>
    <property type="evidence" value="ECO:0007669"/>
    <property type="project" value="InterPro"/>
</dbReference>
<dbReference type="FunFam" id="2.170.150.20:FF:000003">
    <property type="entry name" value="Peptide methionine sulfoxide reductase MsrB"/>
    <property type="match status" value="1"/>
</dbReference>
<dbReference type="Gene3D" id="2.170.150.20">
    <property type="entry name" value="Peptide methionine sulfoxide reductase"/>
    <property type="match status" value="1"/>
</dbReference>
<dbReference type="HAMAP" id="MF_01400">
    <property type="entry name" value="MsrB"/>
    <property type="match status" value="1"/>
</dbReference>
<dbReference type="InterPro" id="IPR028427">
    <property type="entry name" value="Met_Sox_Rdtase_MsrB"/>
</dbReference>
<dbReference type="InterPro" id="IPR002579">
    <property type="entry name" value="Met_Sox_Rdtase_MsrB_dom"/>
</dbReference>
<dbReference type="InterPro" id="IPR011057">
    <property type="entry name" value="Mss4-like_sf"/>
</dbReference>
<dbReference type="NCBIfam" id="TIGR00357">
    <property type="entry name" value="peptide-methionine (R)-S-oxide reductase MsrB"/>
    <property type="match status" value="1"/>
</dbReference>
<dbReference type="PANTHER" id="PTHR10173">
    <property type="entry name" value="METHIONINE SULFOXIDE REDUCTASE"/>
    <property type="match status" value="1"/>
</dbReference>
<dbReference type="PANTHER" id="PTHR10173:SF52">
    <property type="entry name" value="METHIONINE-R-SULFOXIDE REDUCTASE B1"/>
    <property type="match status" value="1"/>
</dbReference>
<dbReference type="Pfam" id="PF01641">
    <property type="entry name" value="SelR"/>
    <property type="match status" value="1"/>
</dbReference>
<dbReference type="SUPFAM" id="SSF51316">
    <property type="entry name" value="Mss4-like"/>
    <property type="match status" value="1"/>
</dbReference>
<dbReference type="PROSITE" id="PS51790">
    <property type="entry name" value="MSRB"/>
    <property type="match status" value="1"/>
</dbReference>
<comment type="catalytic activity">
    <reaction evidence="1">
        <text>L-methionyl-[protein] + [thioredoxin]-disulfide + H2O = L-methionyl-(R)-S-oxide-[protein] + [thioredoxin]-dithiol</text>
        <dbReference type="Rhea" id="RHEA:24164"/>
        <dbReference type="Rhea" id="RHEA-COMP:10698"/>
        <dbReference type="Rhea" id="RHEA-COMP:10700"/>
        <dbReference type="Rhea" id="RHEA-COMP:12313"/>
        <dbReference type="Rhea" id="RHEA-COMP:12314"/>
        <dbReference type="ChEBI" id="CHEBI:15377"/>
        <dbReference type="ChEBI" id="CHEBI:16044"/>
        <dbReference type="ChEBI" id="CHEBI:29950"/>
        <dbReference type="ChEBI" id="CHEBI:45764"/>
        <dbReference type="ChEBI" id="CHEBI:50058"/>
        <dbReference type="EC" id="1.8.4.12"/>
    </reaction>
</comment>
<comment type="cofactor">
    <cofactor evidence="1">
        <name>Zn(2+)</name>
        <dbReference type="ChEBI" id="CHEBI:29105"/>
    </cofactor>
    <text evidence="1">Binds 1 zinc ion per subunit. The zinc ion is important for the structural integrity of the protein.</text>
</comment>
<comment type="similarity">
    <text evidence="1">Belongs to the MsrB Met sulfoxide reductase family.</text>
</comment>
<protein>
    <recommendedName>
        <fullName evidence="1">Peptide methionine sulfoxide reductase MsrB</fullName>
        <ecNumber evidence="1">1.8.4.12</ecNumber>
    </recommendedName>
    <alternativeName>
        <fullName evidence="1">Peptide-methionine (R)-S-oxide reductase</fullName>
    </alternativeName>
</protein>
<accession>Q63V23</accession>
<keyword id="KW-0479">Metal-binding</keyword>
<keyword id="KW-0560">Oxidoreductase</keyword>
<keyword id="KW-1185">Reference proteome</keyword>
<keyword id="KW-0862">Zinc</keyword>
<feature type="chain" id="PRO_1000145360" description="Peptide methionine sulfoxide reductase MsrB">
    <location>
        <begin position="1"/>
        <end position="143"/>
    </location>
</feature>
<feature type="domain" description="MsrB" evidence="2">
    <location>
        <begin position="16"/>
        <end position="139"/>
    </location>
</feature>
<feature type="active site" description="Nucleophile" evidence="2">
    <location>
        <position position="128"/>
    </location>
</feature>
<feature type="binding site" evidence="2">
    <location>
        <position position="55"/>
    </location>
    <ligand>
        <name>Zn(2+)</name>
        <dbReference type="ChEBI" id="CHEBI:29105"/>
    </ligand>
</feature>
<feature type="binding site" evidence="2">
    <location>
        <position position="58"/>
    </location>
    <ligand>
        <name>Zn(2+)</name>
        <dbReference type="ChEBI" id="CHEBI:29105"/>
    </ligand>
</feature>
<feature type="binding site" evidence="2">
    <location>
        <position position="104"/>
    </location>
    <ligand>
        <name>Zn(2+)</name>
        <dbReference type="ChEBI" id="CHEBI:29105"/>
    </ligand>
</feature>
<feature type="binding site" evidence="2">
    <location>
        <position position="107"/>
    </location>
    <ligand>
        <name>Zn(2+)</name>
        <dbReference type="ChEBI" id="CHEBI:29105"/>
    </ligand>
</feature>